<accession>A5N5C6</accession>
<name>REX_CLOK5</name>
<reference key="1">
    <citation type="journal article" date="2008" name="Proc. Natl. Acad. Sci. U.S.A.">
        <title>The genome of Clostridium kluyveri, a strict anaerobe with unique metabolic features.</title>
        <authorList>
            <person name="Seedorf H."/>
            <person name="Fricke W.F."/>
            <person name="Veith B."/>
            <person name="Brueggemann H."/>
            <person name="Liesegang H."/>
            <person name="Strittmatter A."/>
            <person name="Miethke M."/>
            <person name="Buckel W."/>
            <person name="Hinderberger J."/>
            <person name="Li F."/>
            <person name="Hagemeier C."/>
            <person name="Thauer R.K."/>
            <person name="Gottschalk G."/>
        </authorList>
    </citation>
    <scope>NUCLEOTIDE SEQUENCE [LARGE SCALE GENOMIC DNA]</scope>
    <source>
        <strain>ATCC 8527 / DSM 555 / NBRC 12016 / NCIMB 10680 / K1</strain>
    </source>
</reference>
<dbReference type="EMBL" id="CP000673">
    <property type="protein sequence ID" value="EDK32507.1"/>
    <property type="molecule type" value="Genomic_DNA"/>
</dbReference>
<dbReference type="RefSeq" id="WP_011989022.1">
    <property type="nucleotide sequence ID" value="NC_009706.1"/>
</dbReference>
<dbReference type="SMR" id="A5N5C6"/>
<dbReference type="STRING" id="431943.CKL_0453"/>
<dbReference type="KEGG" id="ckl:CKL_0453"/>
<dbReference type="eggNOG" id="COG2344">
    <property type="taxonomic scope" value="Bacteria"/>
</dbReference>
<dbReference type="HOGENOM" id="CLU_061534_1_0_9"/>
<dbReference type="Proteomes" id="UP000002411">
    <property type="component" value="Chromosome"/>
</dbReference>
<dbReference type="GO" id="GO:0005737">
    <property type="term" value="C:cytoplasm"/>
    <property type="evidence" value="ECO:0007669"/>
    <property type="project" value="UniProtKB-SubCell"/>
</dbReference>
<dbReference type="GO" id="GO:0003677">
    <property type="term" value="F:DNA binding"/>
    <property type="evidence" value="ECO:0007669"/>
    <property type="project" value="UniProtKB-UniRule"/>
</dbReference>
<dbReference type="GO" id="GO:0003700">
    <property type="term" value="F:DNA-binding transcription factor activity"/>
    <property type="evidence" value="ECO:0007669"/>
    <property type="project" value="UniProtKB-UniRule"/>
</dbReference>
<dbReference type="GO" id="GO:0045892">
    <property type="term" value="P:negative regulation of DNA-templated transcription"/>
    <property type="evidence" value="ECO:0007669"/>
    <property type="project" value="InterPro"/>
</dbReference>
<dbReference type="GO" id="GO:0051775">
    <property type="term" value="P:response to redox state"/>
    <property type="evidence" value="ECO:0007669"/>
    <property type="project" value="InterPro"/>
</dbReference>
<dbReference type="Gene3D" id="3.40.50.720">
    <property type="entry name" value="NAD(P)-binding Rossmann-like Domain"/>
    <property type="match status" value="1"/>
</dbReference>
<dbReference type="Gene3D" id="1.10.10.10">
    <property type="entry name" value="Winged helix-like DNA-binding domain superfamily/Winged helix DNA-binding domain"/>
    <property type="match status" value="1"/>
</dbReference>
<dbReference type="HAMAP" id="MF_01131">
    <property type="entry name" value="Rex"/>
    <property type="match status" value="1"/>
</dbReference>
<dbReference type="InterPro" id="IPR003781">
    <property type="entry name" value="CoA-bd"/>
</dbReference>
<dbReference type="InterPro" id="IPR036291">
    <property type="entry name" value="NAD(P)-bd_dom_sf"/>
</dbReference>
<dbReference type="InterPro" id="IPR009718">
    <property type="entry name" value="Rex_DNA-bd_C_dom"/>
</dbReference>
<dbReference type="InterPro" id="IPR022876">
    <property type="entry name" value="Tscrpt_rep_Rex"/>
</dbReference>
<dbReference type="InterPro" id="IPR036388">
    <property type="entry name" value="WH-like_DNA-bd_sf"/>
</dbReference>
<dbReference type="InterPro" id="IPR036390">
    <property type="entry name" value="WH_DNA-bd_sf"/>
</dbReference>
<dbReference type="NCBIfam" id="NF003989">
    <property type="entry name" value="PRK05472.1-3"/>
    <property type="match status" value="1"/>
</dbReference>
<dbReference type="NCBIfam" id="NF003990">
    <property type="entry name" value="PRK05472.1-4"/>
    <property type="match status" value="1"/>
</dbReference>
<dbReference type="NCBIfam" id="NF003994">
    <property type="entry name" value="PRK05472.2-3"/>
    <property type="match status" value="1"/>
</dbReference>
<dbReference type="NCBIfam" id="NF003995">
    <property type="entry name" value="PRK05472.2-4"/>
    <property type="match status" value="1"/>
</dbReference>
<dbReference type="NCBIfam" id="NF003996">
    <property type="entry name" value="PRK05472.2-5"/>
    <property type="match status" value="1"/>
</dbReference>
<dbReference type="PANTHER" id="PTHR35786">
    <property type="entry name" value="REDOX-SENSING TRANSCRIPTIONAL REPRESSOR REX"/>
    <property type="match status" value="1"/>
</dbReference>
<dbReference type="PANTHER" id="PTHR35786:SF1">
    <property type="entry name" value="REDOX-SENSING TRANSCRIPTIONAL REPRESSOR REX 1"/>
    <property type="match status" value="1"/>
</dbReference>
<dbReference type="Pfam" id="PF02629">
    <property type="entry name" value="CoA_binding"/>
    <property type="match status" value="1"/>
</dbReference>
<dbReference type="Pfam" id="PF06971">
    <property type="entry name" value="Put_DNA-bind_N"/>
    <property type="match status" value="1"/>
</dbReference>
<dbReference type="SMART" id="SM00881">
    <property type="entry name" value="CoA_binding"/>
    <property type="match status" value="1"/>
</dbReference>
<dbReference type="SUPFAM" id="SSF51735">
    <property type="entry name" value="NAD(P)-binding Rossmann-fold domains"/>
    <property type="match status" value="1"/>
</dbReference>
<dbReference type="SUPFAM" id="SSF46785">
    <property type="entry name" value="Winged helix' DNA-binding domain"/>
    <property type="match status" value="1"/>
</dbReference>
<proteinExistence type="inferred from homology"/>
<feature type="chain" id="PRO_1000085024" description="Redox-sensing transcriptional repressor Rex">
    <location>
        <begin position="1"/>
        <end position="210"/>
    </location>
</feature>
<feature type="DNA-binding region" description="H-T-H motif" evidence="1">
    <location>
        <begin position="17"/>
        <end position="56"/>
    </location>
</feature>
<feature type="binding site" evidence="1">
    <location>
        <begin position="91"/>
        <end position="96"/>
    </location>
    <ligand>
        <name>NAD(+)</name>
        <dbReference type="ChEBI" id="CHEBI:57540"/>
    </ligand>
</feature>
<organism>
    <name type="scientific">Clostridium kluyveri (strain ATCC 8527 / DSM 555 / NBRC 12016 / NCIMB 10680 / K1)</name>
    <dbReference type="NCBI Taxonomy" id="431943"/>
    <lineage>
        <taxon>Bacteria</taxon>
        <taxon>Bacillati</taxon>
        <taxon>Bacillota</taxon>
        <taxon>Clostridia</taxon>
        <taxon>Eubacteriales</taxon>
        <taxon>Clostridiaceae</taxon>
        <taxon>Clostridium</taxon>
    </lineage>
</organism>
<gene>
    <name evidence="1" type="primary">rex</name>
    <name type="ordered locus">CKL_0453</name>
</gene>
<protein>
    <recommendedName>
        <fullName evidence="1">Redox-sensing transcriptional repressor Rex</fullName>
    </recommendedName>
</protein>
<sequence length="210" mass="23639">MDKKKDISMSVIKRLPKYHRYLGNLMRNDVDRISSKELSEKIGFTASQIRQDLNCFGDFGQQGYGYNVSELYSQMCNILGLTKVYRTVIIGAGNIGQAISNYIGFEKLGFELRAIFDINPKLIGISIRDIEIRDIDYLGDYLRENVIDIGIICVPSNNGQKVCNILVKNGVKGIWNFAPVDLIVPEDVKVENVHLSDSLLTLSCLLNDIE</sequence>
<keyword id="KW-0963">Cytoplasm</keyword>
<keyword id="KW-0238">DNA-binding</keyword>
<keyword id="KW-0520">NAD</keyword>
<keyword id="KW-1185">Reference proteome</keyword>
<keyword id="KW-0678">Repressor</keyword>
<keyword id="KW-0804">Transcription</keyword>
<keyword id="KW-0805">Transcription regulation</keyword>
<comment type="function">
    <text evidence="1">Modulates transcription in response to changes in cellular NADH/NAD(+) redox state.</text>
</comment>
<comment type="subunit">
    <text evidence="1">Homodimer.</text>
</comment>
<comment type="subcellular location">
    <subcellularLocation>
        <location evidence="1">Cytoplasm</location>
    </subcellularLocation>
</comment>
<comment type="similarity">
    <text evidence="1">Belongs to the transcriptional regulatory Rex family.</text>
</comment>
<evidence type="ECO:0000255" key="1">
    <source>
        <dbReference type="HAMAP-Rule" id="MF_01131"/>
    </source>
</evidence>